<reference key="1">
    <citation type="journal article" date="1986" name="Science">
        <title>Molecular genetics of human color vision: the genes encoding blue, green, and red pigments.</title>
        <authorList>
            <person name="Nathans J."/>
            <person name="Thomas D."/>
            <person name="Hogness D.S."/>
        </authorList>
    </citation>
    <scope>NUCLEOTIDE SEQUENCE [GENOMIC DNA]</scope>
    <source>
        <tissue>Retinal cone cell</tissue>
    </source>
</reference>
<reference key="2">
    <citation type="journal article" date="2005" name="Nature">
        <title>The DNA sequence of the human X chromosome.</title>
        <authorList>
            <person name="Ross M.T."/>
            <person name="Grafham D.V."/>
            <person name="Coffey A.J."/>
            <person name="Scherer S."/>
            <person name="McLay K."/>
            <person name="Muzny D."/>
            <person name="Platzer M."/>
            <person name="Howell G.R."/>
            <person name="Burrows C."/>
            <person name="Bird C.P."/>
            <person name="Frankish A."/>
            <person name="Lovell F.L."/>
            <person name="Howe K.L."/>
            <person name="Ashurst J.L."/>
            <person name="Fulton R.S."/>
            <person name="Sudbrak R."/>
            <person name="Wen G."/>
            <person name="Jones M.C."/>
            <person name="Hurles M.E."/>
            <person name="Andrews T.D."/>
            <person name="Scott C.E."/>
            <person name="Searle S."/>
            <person name="Ramser J."/>
            <person name="Whittaker A."/>
            <person name="Deadman R."/>
            <person name="Carter N.P."/>
            <person name="Hunt S.E."/>
            <person name="Chen R."/>
            <person name="Cree A."/>
            <person name="Gunaratne P."/>
            <person name="Havlak P."/>
            <person name="Hodgson A."/>
            <person name="Metzker M.L."/>
            <person name="Richards S."/>
            <person name="Scott G."/>
            <person name="Steffen D."/>
            <person name="Sodergren E."/>
            <person name="Wheeler D.A."/>
            <person name="Worley K.C."/>
            <person name="Ainscough R."/>
            <person name="Ambrose K.D."/>
            <person name="Ansari-Lari M.A."/>
            <person name="Aradhya S."/>
            <person name="Ashwell R.I."/>
            <person name="Babbage A.K."/>
            <person name="Bagguley C.L."/>
            <person name="Ballabio A."/>
            <person name="Banerjee R."/>
            <person name="Barker G.E."/>
            <person name="Barlow K.F."/>
            <person name="Barrett I.P."/>
            <person name="Bates K.N."/>
            <person name="Beare D.M."/>
            <person name="Beasley H."/>
            <person name="Beasley O."/>
            <person name="Beck A."/>
            <person name="Bethel G."/>
            <person name="Blechschmidt K."/>
            <person name="Brady N."/>
            <person name="Bray-Allen S."/>
            <person name="Bridgeman A.M."/>
            <person name="Brown A.J."/>
            <person name="Brown M.J."/>
            <person name="Bonnin D."/>
            <person name="Bruford E.A."/>
            <person name="Buhay C."/>
            <person name="Burch P."/>
            <person name="Burford D."/>
            <person name="Burgess J."/>
            <person name="Burrill W."/>
            <person name="Burton J."/>
            <person name="Bye J.M."/>
            <person name="Carder C."/>
            <person name="Carrel L."/>
            <person name="Chako J."/>
            <person name="Chapman J.C."/>
            <person name="Chavez D."/>
            <person name="Chen E."/>
            <person name="Chen G."/>
            <person name="Chen Y."/>
            <person name="Chen Z."/>
            <person name="Chinault C."/>
            <person name="Ciccodicola A."/>
            <person name="Clark S.Y."/>
            <person name="Clarke G."/>
            <person name="Clee C.M."/>
            <person name="Clegg S."/>
            <person name="Clerc-Blankenburg K."/>
            <person name="Clifford K."/>
            <person name="Cobley V."/>
            <person name="Cole C.G."/>
            <person name="Conquer J.S."/>
            <person name="Corby N."/>
            <person name="Connor R.E."/>
            <person name="David R."/>
            <person name="Davies J."/>
            <person name="Davis C."/>
            <person name="Davis J."/>
            <person name="Delgado O."/>
            <person name="Deshazo D."/>
            <person name="Dhami P."/>
            <person name="Ding Y."/>
            <person name="Dinh H."/>
            <person name="Dodsworth S."/>
            <person name="Draper H."/>
            <person name="Dugan-Rocha S."/>
            <person name="Dunham A."/>
            <person name="Dunn M."/>
            <person name="Durbin K.J."/>
            <person name="Dutta I."/>
            <person name="Eades T."/>
            <person name="Ellwood M."/>
            <person name="Emery-Cohen A."/>
            <person name="Errington H."/>
            <person name="Evans K.L."/>
            <person name="Faulkner L."/>
            <person name="Francis F."/>
            <person name="Frankland J."/>
            <person name="Fraser A.E."/>
            <person name="Galgoczy P."/>
            <person name="Gilbert J."/>
            <person name="Gill R."/>
            <person name="Gloeckner G."/>
            <person name="Gregory S.G."/>
            <person name="Gribble S."/>
            <person name="Griffiths C."/>
            <person name="Grocock R."/>
            <person name="Gu Y."/>
            <person name="Gwilliam R."/>
            <person name="Hamilton C."/>
            <person name="Hart E.A."/>
            <person name="Hawes A."/>
            <person name="Heath P.D."/>
            <person name="Heitmann K."/>
            <person name="Hennig S."/>
            <person name="Hernandez J."/>
            <person name="Hinzmann B."/>
            <person name="Ho S."/>
            <person name="Hoffs M."/>
            <person name="Howden P.J."/>
            <person name="Huckle E.J."/>
            <person name="Hume J."/>
            <person name="Hunt P.J."/>
            <person name="Hunt A.R."/>
            <person name="Isherwood J."/>
            <person name="Jacob L."/>
            <person name="Johnson D."/>
            <person name="Jones S."/>
            <person name="de Jong P.J."/>
            <person name="Joseph S.S."/>
            <person name="Keenan S."/>
            <person name="Kelly S."/>
            <person name="Kershaw J.K."/>
            <person name="Khan Z."/>
            <person name="Kioschis P."/>
            <person name="Klages S."/>
            <person name="Knights A.J."/>
            <person name="Kosiura A."/>
            <person name="Kovar-Smith C."/>
            <person name="Laird G.K."/>
            <person name="Langford C."/>
            <person name="Lawlor S."/>
            <person name="Leversha M."/>
            <person name="Lewis L."/>
            <person name="Liu W."/>
            <person name="Lloyd C."/>
            <person name="Lloyd D.M."/>
            <person name="Loulseged H."/>
            <person name="Loveland J.E."/>
            <person name="Lovell J.D."/>
            <person name="Lozado R."/>
            <person name="Lu J."/>
            <person name="Lyne R."/>
            <person name="Ma J."/>
            <person name="Maheshwari M."/>
            <person name="Matthews L.H."/>
            <person name="McDowall J."/>
            <person name="McLaren S."/>
            <person name="McMurray A."/>
            <person name="Meidl P."/>
            <person name="Meitinger T."/>
            <person name="Milne S."/>
            <person name="Miner G."/>
            <person name="Mistry S.L."/>
            <person name="Morgan M."/>
            <person name="Morris S."/>
            <person name="Mueller I."/>
            <person name="Mullikin J.C."/>
            <person name="Nguyen N."/>
            <person name="Nordsiek G."/>
            <person name="Nyakatura G."/>
            <person name="O'dell C.N."/>
            <person name="Okwuonu G."/>
            <person name="Palmer S."/>
            <person name="Pandian R."/>
            <person name="Parker D."/>
            <person name="Parrish J."/>
            <person name="Pasternak S."/>
            <person name="Patel D."/>
            <person name="Pearce A.V."/>
            <person name="Pearson D.M."/>
            <person name="Pelan S.E."/>
            <person name="Perez L."/>
            <person name="Porter K.M."/>
            <person name="Ramsey Y."/>
            <person name="Reichwald K."/>
            <person name="Rhodes S."/>
            <person name="Ridler K.A."/>
            <person name="Schlessinger D."/>
            <person name="Schueler M.G."/>
            <person name="Sehra H.K."/>
            <person name="Shaw-Smith C."/>
            <person name="Shen H."/>
            <person name="Sheridan E.M."/>
            <person name="Shownkeen R."/>
            <person name="Skuce C.D."/>
            <person name="Smith M.L."/>
            <person name="Sotheran E.C."/>
            <person name="Steingruber H.E."/>
            <person name="Steward C.A."/>
            <person name="Storey R."/>
            <person name="Swann R.M."/>
            <person name="Swarbreck D."/>
            <person name="Tabor P.E."/>
            <person name="Taudien S."/>
            <person name="Taylor T."/>
            <person name="Teague B."/>
            <person name="Thomas K."/>
            <person name="Thorpe A."/>
            <person name="Timms K."/>
            <person name="Tracey A."/>
            <person name="Trevanion S."/>
            <person name="Tromans A.C."/>
            <person name="d'Urso M."/>
            <person name="Verduzco D."/>
            <person name="Villasana D."/>
            <person name="Waldron L."/>
            <person name="Wall M."/>
            <person name="Wang Q."/>
            <person name="Warren J."/>
            <person name="Warry G.L."/>
            <person name="Wei X."/>
            <person name="West A."/>
            <person name="Whitehead S.L."/>
            <person name="Whiteley M.N."/>
            <person name="Wilkinson J.E."/>
            <person name="Willey D.L."/>
            <person name="Williams G."/>
            <person name="Williams L."/>
            <person name="Williamson A."/>
            <person name="Williamson H."/>
            <person name="Wilming L."/>
            <person name="Woodmansey R.L."/>
            <person name="Wray P.W."/>
            <person name="Yen J."/>
            <person name="Zhang J."/>
            <person name="Zhou J."/>
            <person name="Zoghbi H."/>
            <person name="Zorilla S."/>
            <person name="Buck D."/>
            <person name="Reinhardt R."/>
            <person name="Poustka A."/>
            <person name="Rosenthal A."/>
            <person name="Lehrach H."/>
            <person name="Meindl A."/>
            <person name="Minx P.J."/>
            <person name="Hillier L.W."/>
            <person name="Willard H.F."/>
            <person name="Wilson R.K."/>
            <person name="Waterston R.H."/>
            <person name="Rice C.M."/>
            <person name="Vaudin M."/>
            <person name="Coulson A."/>
            <person name="Nelson D.L."/>
            <person name="Weinstock G."/>
            <person name="Sulston J.E."/>
            <person name="Durbin R.M."/>
            <person name="Hubbard T."/>
            <person name="Gibbs R.A."/>
            <person name="Beck S."/>
            <person name="Rogers J."/>
            <person name="Bentley D.R."/>
        </authorList>
    </citation>
    <scope>NUCLEOTIDE SEQUENCE [LARGE SCALE GENOMIC DNA]</scope>
</reference>
<reference key="3">
    <citation type="journal article" date="1986" name="Vision Res.">
        <title>Molecular biology of the visual pigments.</title>
        <authorList>
            <person name="Applebury M.L."/>
            <person name="Hargrave P.A."/>
        </authorList>
    </citation>
    <scope>REVIEW</scope>
</reference>
<reference key="4">
    <citation type="journal article" date="2017" name="Biochemistry">
        <title>Hydrogen/deuterium exchange mass spectrometry of human green opsin reveals a conserved Pro-Pro motif in extracellular loop 2 of monostable visual G protein-coupled receptors.</title>
        <authorList>
            <person name="Hofmann L."/>
            <person name="Alexander N.S."/>
            <person name="Sun W."/>
            <person name="Zhang J."/>
            <person name="Orban T."/>
            <person name="Palczewski K."/>
        </authorList>
    </citation>
    <scope>SUBUNIT</scope>
    <scope>GLYCOSYLATION AT ASN-34</scope>
    <scope>IDENTIFICATION BY MASS SPECTROMETRY</scope>
</reference>
<reference key="5">
    <citation type="journal article" date="1992" name="Nat. Genet.">
        <title>Defective colour vision associated with a missense mutation in the human green visual pigment gene.</title>
        <authorList>
            <person name="Winderickx J."/>
            <person name="Sanocki E."/>
            <person name="Lindsey D.T."/>
            <person name="Teller D.Y."/>
            <person name="Motulsky A.G."/>
            <person name="Deeb S.S."/>
        </authorList>
    </citation>
    <scope>VARIANT CBD ARG-203</scope>
    <scope>FUNCTION</scope>
</reference>
<reference key="6">
    <citation type="journal article" date="2019" name="J. Biol. Chem.">
        <title>Human red and green cone opsins are O-glycosylated at an N-terminal Ser/Thr-rich domain conserved in vertebrates.</title>
        <authorList>
            <person name="Salom D."/>
            <person name="Jin H."/>
            <person name="Gerken T.A."/>
            <person name="Yu C."/>
            <person name="Huang L."/>
            <person name="Palczewski K."/>
        </authorList>
    </citation>
    <scope>GLYCOSYLATION</scope>
    <scope>REGION</scope>
</reference>
<reference key="7">
    <citation type="journal article" date="1995" name="Genomics">
        <title>Gene conversion between red and defective green opsin gene in blue cone monochromacy.</title>
        <authorList>
            <person name="Reyniers E."/>
            <person name="Van Thienen M.N."/>
            <person name="Meire F."/>
            <person name="De Boulle K."/>
            <person name="Devries K."/>
            <person name="Kestelijn P."/>
            <person name="Willems P.J."/>
        </authorList>
    </citation>
    <scope>VARIANT BCM ARG-203</scope>
</reference>
<reference key="8">
    <citation type="journal article" date="2002" name="Biochem. Biophys. Res. Commun.">
        <title>Novel missense mutations in red/green opsin genes in congenital color-vision deficiencies.</title>
        <authorList>
            <person name="Ueyama H."/>
            <person name="Kuwayama S."/>
            <person name="Imai H."/>
            <person name="Tanabe S."/>
            <person name="Oda S."/>
            <person name="Nishida Y."/>
            <person name="Wada A."/>
            <person name="Shichida Y."/>
            <person name="Yamade S."/>
        </authorList>
    </citation>
    <scope>VARIANTS CBD LYS-94 AND GLN-330</scope>
    <scope>FUNCTION</scope>
</reference>
<reference key="9">
    <citation type="journal article" date="2010" name="Am. J. Hum. Genet.">
        <title>X-linked cone dystrophy caused by mutation of the red and green cone opsins.</title>
        <authorList>
            <person name="Gardner J.C."/>
            <person name="Webb T.R."/>
            <person name="Kanuga N."/>
            <person name="Robson A.G."/>
            <person name="Holder G.E."/>
            <person name="Stockman A."/>
            <person name="Ripamonti C."/>
            <person name="Ebenezer N.D."/>
            <person name="Ogun O."/>
            <person name="Devery S."/>
            <person name="Wright G.A."/>
            <person name="Maher E.R."/>
            <person name="Cheetham M.E."/>
            <person name="Moore A.T."/>
            <person name="Michaelides M."/>
            <person name="Hardcastle A.J."/>
        </authorList>
    </citation>
    <scope>VARIANT COD5 ARG-177</scope>
    <scope>CHARACTERIZATION OF VARIANT COD5 ARG-177</scope>
    <scope>SUBCELLULAR LOCATION</scope>
</reference>
<evidence type="ECO:0000255" key="1"/>
<evidence type="ECO:0000255" key="2">
    <source>
        <dbReference type="PROSITE-ProRule" id="PRU00521"/>
    </source>
</evidence>
<evidence type="ECO:0000256" key="3">
    <source>
        <dbReference type="SAM" id="MobiDB-lite"/>
    </source>
</evidence>
<evidence type="ECO:0000269" key="4">
    <source>
    </source>
</evidence>
<evidence type="ECO:0000269" key="5">
    <source>
    </source>
</evidence>
<evidence type="ECO:0000269" key="6">
    <source>
    </source>
</evidence>
<evidence type="ECO:0000269" key="7">
    <source>
    </source>
</evidence>
<evidence type="ECO:0000269" key="8">
    <source>
    </source>
</evidence>
<evidence type="ECO:0000269" key="9">
    <source>
    </source>
</evidence>
<evidence type="ECO:0000305" key="10"/>
<evidence type="ECO:0000305" key="11">
    <source>
    </source>
</evidence>
<evidence type="ECO:0000305" key="12">
    <source>
    </source>
</evidence>
<evidence type="ECO:0000305" key="13">
    <source>
    </source>
</evidence>
<evidence type="ECO:0000312" key="14">
    <source>
        <dbReference type="HGNC" id="HGNC:4206"/>
    </source>
</evidence>
<sequence length="364" mass="40584">MAQQWSLQRLAGRHPQDSYEDSTQSSIFTYTNSNSTRGPFEGPNYHIAPRWVYHLTSVWMIFVVIASVFTNGLVLAATMKFKKLRHPLNWILVNLAVADLAETVIASTISVVNQVYGYFVLGHPMCVLEGYTVSLCGITGLWSLAIISWERWMVVCKPFGNVRFDAKLAIVGIAFSWIWAAVWTAPPIFGWSRYWPHGLKTSCGPDVFSGSSYPGVQSYMIVLMVTCCITPLSIIVLCYLQVWLAIRAVAKQQKESESTQKAEKEVTRMVVVMVLAFCFCWGPYAFFACFAAANPGYPFHPLMAALPAFFAKSATIYNPVIYVFMNRQFRNCILQLFGKKVDDGSELSSASKTEVSSVSSVSPA</sequence>
<organism>
    <name type="scientific">Homo sapiens</name>
    <name type="common">Human</name>
    <dbReference type="NCBI Taxonomy" id="9606"/>
    <lineage>
        <taxon>Eukaryota</taxon>
        <taxon>Metazoa</taxon>
        <taxon>Chordata</taxon>
        <taxon>Craniata</taxon>
        <taxon>Vertebrata</taxon>
        <taxon>Euteleostomi</taxon>
        <taxon>Mammalia</taxon>
        <taxon>Eutheria</taxon>
        <taxon>Euarchontoglires</taxon>
        <taxon>Primates</taxon>
        <taxon>Haplorrhini</taxon>
        <taxon>Catarrhini</taxon>
        <taxon>Hominidae</taxon>
        <taxon>Homo</taxon>
    </lineage>
</organism>
<name>OPSG_HUMAN</name>
<keyword id="KW-0002">3D-structure</keyword>
<keyword id="KW-1003">Cell membrane</keyword>
<keyword id="KW-0157">Chromophore</keyword>
<keyword id="KW-0225">Disease variant</keyword>
<keyword id="KW-1015">Disulfide bond</keyword>
<keyword id="KW-0297">G-protein coupled receptor</keyword>
<keyword id="KW-0325">Glycoprotein</keyword>
<keyword id="KW-0472">Membrane</keyword>
<keyword id="KW-0597">Phosphoprotein</keyword>
<keyword id="KW-0600">Photoreceptor protein</keyword>
<keyword id="KW-0675">Receptor</keyword>
<keyword id="KW-1185">Reference proteome</keyword>
<keyword id="KW-0681">Retinal protein</keyword>
<keyword id="KW-0716">Sensory transduction</keyword>
<keyword id="KW-0807">Transducer</keyword>
<keyword id="KW-0812">Transmembrane</keyword>
<keyword id="KW-1133">Transmembrane helix</keyword>
<keyword id="KW-0844">Vision</keyword>
<comment type="function">
    <text evidence="11 12 13">Visual pigments are the light-absorbing molecules that mediate vision. They consist of an apoprotein, opsin, covalently linked to cis-retinal.</text>
</comment>
<comment type="biophysicochemical properties">
    <absorption>
        <max evidence="13">530 nm</max>
    </absorption>
</comment>
<comment type="subunit">
    <text evidence="7">Monomer. Homodimer. Homotetramer.</text>
</comment>
<comment type="subcellular location">
    <subcellularLocation>
        <location evidence="6">Cell membrane</location>
        <topology evidence="1">Multi-pass membrane protein</topology>
    </subcellularLocation>
</comment>
<comment type="tissue specificity">
    <text evidence="13">The three color pigments are found in the cone photoreceptor cells.</text>
</comment>
<comment type="PTM">
    <text evidence="8">N-glycosylated (PubMed:30948514). O-glycosylated (PubMed:30948514).</text>
</comment>
<comment type="PTM">
    <text evidence="13">Phosphorylated on some or all of the serine and threonine residues present in the C-terminal region.</text>
</comment>
<comment type="disease" evidence="4 5">
    <disease id="DI-02144">
        <name>Colorblindness, partial, deutan series</name>
        <acronym>CBD</acronym>
        <description>A color vision defect characterized by a dichromasy in which red and green are confused, without loss of luminance or shift or shortening of the spectrum. Dichromasy is due to the use of only two types of photoreceptors, blue plus red in deuteranopia and blue plus green in protanopia.</description>
        <dbReference type="MIM" id="303800"/>
    </disease>
    <text>The disease is caused by variants affecting the gene represented in this entry.</text>
</comment>
<comment type="disease" evidence="9">
    <disease id="DI-02866">
        <name>Blue cone monochromacy</name>
        <acronym>BCM</acronym>
        <description>A rare X-linked congenital stationary cone dysfunction syndrome characterized by the absence of functional long wavelength-sensitive and medium wavelength-sensitive cones in the retina. Color discrimination is severely impaired from birth, and vision is derived from the remaining preserved blue (S) cones and rod photoreceptors. BCM typically presents with reduced visual acuity, pendular nystagmus, and photophobia. Patients often have myopia.</description>
        <dbReference type="MIM" id="303700"/>
    </disease>
    <text>The disease is caused by variants affecting the gene represented in this entry.</text>
</comment>
<comment type="disease" evidence="6">
    <disease id="DI-02905">
        <name>Cone dystrophy 5</name>
        <acronym>COD5</acronym>
        <description>An X-linked cone dystrophy. Cone dystrophies are retinal dystrophies characterized by progressive degeneration of the cone photoreceptors with preservation of rod function, as indicated by electroretinogram. However, some rod involvement may be present in some cone dystrophies, particularly at late stage. Affected individuals suffer from photophobia, loss of visual acuity, color vision and central visual field. Another sign is the absence of macular lesions for many years. Cone dystrophies are distinguished from the cone-rod dystrophies in which some loss of peripheral vision also occurs.</description>
        <dbReference type="MIM" id="303700"/>
    </disease>
    <text>The disease is caused by variants affecting the gene represented in this entry.</text>
</comment>
<comment type="similarity">
    <text evidence="2">Belongs to the G-protein coupled receptor 1 family. Opsin subfamily.</text>
</comment>
<comment type="caution">
    <text evidence="10">Medium-wave-sensitive opsin genes vary in number among individuals and, together with a single red pigment gene, reside in a head-to-tail tandem array within the X chromosome. In the GRCh38 reference genome assembly, there are 3 genes in tandem coding for identical proteins AC P04001, AC P0DN77 and P0DN78.</text>
</comment>
<feature type="chain" id="PRO_0000197785" description="Medium-wave-sensitive opsin 1">
    <location>
        <begin position="1"/>
        <end position="364"/>
    </location>
</feature>
<feature type="topological domain" description="Extracellular" evidence="10">
    <location>
        <begin position="1"/>
        <end position="52"/>
    </location>
</feature>
<feature type="transmembrane region" description="Helical; Name=1" evidence="1">
    <location>
        <begin position="53"/>
        <end position="77"/>
    </location>
</feature>
<feature type="topological domain" description="Cytoplasmic" evidence="10">
    <location>
        <begin position="78"/>
        <end position="89"/>
    </location>
</feature>
<feature type="transmembrane region" description="Helical; Name=2" evidence="1">
    <location>
        <begin position="90"/>
        <end position="115"/>
    </location>
</feature>
<feature type="topological domain" description="Extracellular" evidence="10">
    <location>
        <begin position="116"/>
        <end position="129"/>
    </location>
</feature>
<feature type="transmembrane region" description="Helical; Name=3" evidence="1">
    <location>
        <begin position="130"/>
        <end position="149"/>
    </location>
</feature>
<feature type="topological domain" description="Cytoplasmic" evidence="10">
    <location>
        <begin position="150"/>
        <end position="168"/>
    </location>
</feature>
<feature type="transmembrane region" description="Helical; Name=4" evidence="1">
    <location>
        <begin position="169"/>
        <end position="192"/>
    </location>
</feature>
<feature type="topological domain" description="Extracellular" evidence="10">
    <location>
        <begin position="193"/>
        <end position="218"/>
    </location>
</feature>
<feature type="transmembrane region" description="Helical; Name=5" evidence="1">
    <location>
        <begin position="219"/>
        <end position="246"/>
    </location>
</feature>
<feature type="topological domain" description="Cytoplasmic" evidence="10">
    <location>
        <begin position="247"/>
        <end position="268"/>
    </location>
</feature>
<feature type="transmembrane region" description="Helical; Name=6" evidence="1">
    <location>
        <begin position="269"/>
        <end position="292"/>
    </location>
</feature>
<feature type="topological domain" description="Extracellular" evidence="10">
    <location>
        <begin position="293"/>
        <end position="300"/>
    </location>
</feature>
<feature type="transmembrane region" description="Helical; Name=7" evidence="1">
    <location>
        <begin position="301"/>
        <end position="325"/>
    </location>
</feature>
<feature type="topological domain" description="Cytoplasmic" evidence="10">
    <location>
        <begin position="326"/>
        <end position="364"/>
    </location>
</feature>
<feature type="region of interest" description="Disordered" evidence="3">
    <location>
        <begin position="1"/>
        <end position="23"/>
    </location>
</feature>
<feature type="region of interest" description="Required for 11-cis-retinal regeneration" evidence="8">
    <location>
        <begin position="17"/>
        <end position="43"/>
    </location>
</feature>
<feature type="modified residue" description="N6-(retinylidene)lysine" evidence="10">
    <location>
        <position position="312"/>
    </location>
</feature>
<feature type="glycosylation site" description="N-linked (GlcNAc...) asparagine" evidence="7">
    <location>
        <position position="34"/>
    </location>
</feature>
<feature type="disulfide bond" evidence="2">
    <location>
        <begin position="126"/>
        <end position="203"/>
    </location>
</feature>
<feature type="sequence variant" id="VAR_064051" description="In CBD; dbSNP:rs104894915." evidence="4">
    <original>N</original>
    <variation>K</variation>
    <location>
        <position position="94"/>
    </location>
</feature>
<feature type="sequence variant" id="VAR_064052" description="In COD5; results in protein misfolding and retention in the endoplasmic reticulum; dbSNP:rs267606927." evidence="6">
    <original>W</original>
    <variation>R</variation>
    <location>
        <position position="177"/>
    </location>
</feature>
<feature type="sequence variant" id="VAR_004841" description="In CBD and BCM; dbSNP:rs104894914." evidence="5 9">
    <original>C</original>
    <variation>R</variation>
    <location>
        <position position="203"/>
    </location>
</feature>
<feature type="sequence variant" id="VAR_064053" description="In CBD; dbSNP:rs104894916." evidence="4">
    <original>R</original>
    <variation>Q</variation>
    <location>
        <position position="330"/>
    </location>
</feature>
<dbReference type="EMBL" id="K03494">
    <property type="protein sequence ID" value="AAB59503.1"/>
    <property type="molecule type" value="Genomic_DNA"/>
</dbReference>
<dbReference type="EMBL" id="M13306">
    <property type="protein sequence ID" value="AAB59503.1"/>
    <property type="status" value="JOINED"/>
    <property type="molecule type" value="Genomic_DNA"/>
</dbReference>
<dbReference type="EMBL" id="K03490">
    <property type="protein sequence ID" value="AAB59503.1"/>
    <property type="status" value="JOINED"/>
    <property type="molecule type" value="Genomic_DNA"/>
</dbReference>
<dbReference type="EMBL" id="K03491">
    <property type="protein sequence ID" value="AAB59503.1"/>
    <property type="status" value="JOINED"/>
    <property type="molecule type" value="Genomic_DNA"/>
</dbReference>
<dbReference type="EMBL" id="K03492">
    <property type="protein sequence ID" value="AAB59503.1"/>
    <property type="status" value="JOINED"/>
    <property type="molecule type" value="Genomic_DNA"/>
</dbReference>
<dbReference type="EMBL" id="K03493">
    <property type="protein sequence ID" value="AAB59503.1"/>
    <property type="status" value="JOINED"/>
    <property type="molecule type" value="Genomic_DNA"/>
</dbReference>
<dbReference type="EMBL" id="K03497">
    <property type="protein sequence ID" value="AAB59525.1"/>
    <property type="status" value="ALT_SEQ"/>
    <property type="molecule type" value="Genomic_DNA"/>
</dbReference>
<dbReference type="EMBL" id="K03495">
    <property type="protein sequence ID" value="AAB59525.1"/>
    <property type="status" value="JOINED"/>
    <property type="molecule type" value="Genomic_DNA"/>
</dbReference>
<dbReference type="EMBL" id="K03496">
    <property type="protein sequence ID" value="AAB59525.1"/>
    <property type="status" value="JOINED"/>
    <property type="molecule type" value="Genomic_DNA"/>
</dbReference>
<dbReference type="EMBL" id="AC244097">
    <property type="status" value="NOT_ANNOTATED_CDS"/>
    <property type="molecule type" value="Genomic_DNA"/>
</dbReference>
<dbReference type="CCDS" id="CCDS14743.1"/>
<dbReference type="CCDS" id="CCDS35447.1"/>
<dbReference type="PIR" id="A03158">
    <property type="entry name" value="OOHUG"/>
</dbReference>
<dbReference type="RefSeq" id="NP_000504.1">
    <property type="nucleotide sequence ID" value="NM_000513.2"/>
</dbReference>
<dbReference type="RefSeq" id="NP_001316996.1">
    <property type="nucleotide sequence ID" value="NM_001330067.1"/>
</dbReference>
<dbReference type="RefSeq" id="XP_016855469.1">
    <property type="nucleotide sequence ID" value="XM_016999980.1"/>
</dbReference>
<dbReference type="PDB" id="8Y01">
    <property type="method" value="EM"/>
    <property type="resolution" value="2.48 A"/>
    <property type="chains" value="R=1-364"/>
</dbReference>
<dbReference type="PDBsum" id="8Y01"/>
<dbReference type="EMDB" id="EMD-38800"/>
<dbReference type="SMR" id="P04001"/>
<dbReference type="FunCoup" id="P04001">
    <property type="interactions" value="302"/>
</dbReference>
<dbReference type="GlyCosmos" id="P04001">
    <property type="glycosylation" value="1 site, No reported glycans"/>
</dbReference>
<dbReference type="GlyGen" id="P04001">
    <property type="glycosylation" value="1 site"/>
</dbReference>
<dbReference type="iPTMnet" id="P04001"/>
<dbReference type="PhosphoSitePlus" id="P04001"/>
<dbReference type="BioMuta" id="OPN1MW"/>
<dbReference type="DMDM" id="129215"/>
<dbReference type="MassIVE" id="P04001"/>
<dbReference type="Antibodypedia" id="75857">
    <property type="antibodies" value="63 antibodies from 12 providers"/>
</dbReference>
<dbReference type="DNASU" id="2652"/>
<dbReference type="Ensembl" id="ENST00000595290.6">
    <property type="protein sequence ID" value="ENSP00000472316.1"/>
    <property type="gene ID" value="ENSG00000268221.6"/>
</dbReference>
<dbReference type="GeneID" id="101060233"/>
<dbReference type="GeneID" id="2652"/>
<dbReference type="KEGG" id="hsa:101060233"/>
<dbReference type="KEGG" id="hsa:2652"/>
<dbReference type="KEGG" id="hsa:728458"/>
<dbReference type="MANE-Select" id="ENST00000595290.6">
    <property type="protein sequence ID" value="ENSP00000472316.1"/>
    <property type="RefSeq nucleotide sequence ID" value="NM_000513.2"/>
    <property type="RefSeq protein sequence ID" value="NP_000504.1"/>
</dbReference>
<dbReference type="UCSC" id="uc004fkb.4">
    <property type="organism name" value="human"/>
</dbReference>
<dbReference type="AGR" id="HGNC:26952"/>
<dbReference type="AGR" id="HGNC:4206"/>
<dbReference type="AGR" id="HGNC:51831"/>
<dbReference type="CTD" id="101060233"/>
<dbReference type="CTD" id="2652"/>
<dbReference type="CTD" id="728458"/>
<dbReference type="DisGeNET" id="101060233"/>
<dbReference type="DisGeNET" id="2652"/>
<dbReference type="DisGeNET" id="728458"/>
<dbReference type="GeneCards" id="OPN1MW"/>
<dbReference type="HGNC" id="HGNC:4206">
    <property type="gene designation" value="OPN1MW"/>
</dbReference>
<dbReference type="HPA" id="ENSG00000268221">
    <property type="expression patterns" value="Tissue enriched (retina)"/>
</dbReference>
<dbReference type="MalaCards" id="OPN1MW"/>
<dbReference type="MIM" id="300821">
    <property type="type" value="gene"/>
</dbReference>
<dbReference type="MIM" id="303700">
    <property type="type" value="phenotype"/>
</dbReference>
<dbReference type="MIM" id="303800">
    <property type="type" value="phenotype"/>
</dbReference>
<dbReference type="neXtProt" id="NX_P04001"/>
<dbReference type="OpenTargets" id="ENSG00000268221"/>
<dbReference type="Orphanet" id="16">
    <property type="disease" value="Blue cone monochromatism"/>
</dbReference>
<dbReference type="Orphanet" id="1872">
    <property type="disease" value="Cone rod dystrophy"/>
</dbReference>
<dbReference type="Orphanet" id="90001">
    <property type="disease" value="X-linked cone dysfunction syndrome with myopia"/>
</dbReference>
<dbReference type="PharmGKB" id="PA142671229"/>
<dbReference type="VEuPathDB" id="HostDB:ENSG00000268221"/>
<dbReference type="HOGENOM" id="CLU_009579_3_0_1"/>
<dbReference type="InParanoid" id="P04001"/>
<dbReference type="OMA" id="RRICKER"/>
<dbReference type="OrthoDB" id="8545112at2759"/>
<dbReference type="PAN-GO" id="P04001">
    <property type="GO annotations" value="6 GO annotations based on evolutionary models"/>
</dbReference>
<dbReference type="PhylomeDB" id="P04001"/>
<dbReference type="TreeFam" id="TF324998"/>
<dbReference type="PathwayCommons" id="P04001"/>
<dbReference type="Reactome" id="R-HSA-2187335">
    <property type="pathway name" value="The retinoid cycle in cones (daylight vision)"/>
</dbReference>
<dbReference type="Reactome" id="R-HSA-418594">
    <property type="pathway name" value="G alpha (i) signalling events"/>
</dbReference>
<dbReference type="Reactome" id="R-HSA-419771">
    <property type="pathway name" value="Opsins"/>
</dbReference>
<dbReference type="Reactome" id="R-HSA-9918436">
    <property type="pathway name" value="Defective visual phototransduction due to OPN1MW loss of function"/>
</dbReference>
<dbReference type="SignaLink" id="P04001"/>
<dbReference type="SIGNOR" id="P04001"/>
<dbReference type="BioGRID-ORCS" id="101060233">
    <property type="hits" value="1 hit in 6 CRISPR screens"/>
</dbReference>
<dbReference type="BioGRID-ORCS" id="2652">
    <property type="hits" value="7 hits in 250 CRISPR screens"/>
</dbReference>
<dbReference type="BioGRID-ORCS" id="728458">
    <property type="hits" value="4 hits in 254 CRISPR screens"/>
</dbReference>
<dbReference type="ChiTaRS" id="OPN1MW">
    <property type="organism name" value="human"/>
</dbReference>
<dbReference type="GeneWiki" id="OPN1MW"/>
<dbReference type="Pharos" id="P04001">
    <property type="development level" value="Tdark"/>
</dbReference>
<dbReference type="PRO" id="PR:P04001"/>
<dbReference type="Proteomes" id="UP000005640">
    <property type="component" value="Chromosome X"/>
</dbReference>
<dbReference type="RNAct" id="P04001">
    <property type="molecule type" value="protein"/>
</dbReference>
<dbReference type="Bgee" id="ENSG00000268221">
    <property type="expression patterns" value="Expressed in male germ line stem cell (sensu Vertebrata) in testis and 14 other cell types or tissues"/>
</dbReference>
<dbReference type="ExpressionAtlas" id="P04001">
    <property type="expression patterns" value="baseline"/>
</dbReference>
<dbReference type="GO" id="GO:0097381">
    <property type="term" value="C:photoreceptor disc membrane"/>
    <property type="evidence" value="ECO:0000304"/>
    <property type="project" value="Reactome"/>
</dbReference>
<dbReference type="GO" id="GO:0001750">
    <property type="term" value="C:photoreceptor outer segment"/>
    <property type="evidence" value="ECO:0000318"/>
    <property type="project" value="GO_Central"/>
</dbReference>
<dbReference type="GO" id="GO:0005886">
    <property type="term" value="C:plasma membrane"/>
    <property type="evidence" value="ECO:0000314"/>
    <property type="project" value="UniProtKB"/>
</dbReference>
<dbReference type="GO" id="GO:0008020">
    <property type="term" value="F:G protein-coupled photoreceptor activity"/>
    <property type="evidence" value="ECO:0000318"/>
    <property type="project" value="GO_Central"/>
</dbReference>
<dbReference type="GO" id="GO:0042802">
    <property type="term" value="F:identical protein binding"/>
    <property type="evidence" value="ECO:0000314"/>
    <property type="project" value="UniProtKB"/>
</dbReference>
<dbReference type="GO" id="GO:0009881">
    <property type="term" value="F:photoreceptor activity"/>
    <property type="evidence" value="ECO:0000315"/>
    <property type="project" value="CACAO"/>
</dbReference>
<dbReference type="GO" id="GO:0071482">
    <property type="term" value="P:cellular response to light stimulus"/>
    <property type="evidence" value="ECO:0000318"/>
    <property type="project" value="GO_Central"/>
</dbReference>
<dbReference type="GO" id="GO:0007186">
    <property type="term" value="P:G protein-coupled receptor signaling pathway"/>
    <property type="evidence" value="ECO:0000318"/>
    <property type="project" value="GO_Central"/>
</dbReference>
<dbReference type="GO" id="GO:0007602">
    <property type="term" value="P:phototransduction"/>
    <property type="evidence" value="ECO:0000318"/>
    <property type="project" value="GO_Central"/>
</dbReference>
<dbReference type="GO" id="GO:0032467">
    <property type="term" value="P:positive regulation of cytokinesis"/>
    <property type="evidence" value="ECO:0000315"/>
    <property type="project" value="UniProtKB"/>
</dbReference>
<dbReference type="GO" id="GO:0007601">
    <property type="term" value="P:visual perception"/>
    <property type="evidence" value="ECO:0000304"/>
    <property type="project" value="ProtInc"/>
</dbReference>
<dbReference type="FunFam" id="1.20.1070.10:FF:000090">
    <property type="entry name" value="Long-wave-sensitive opsin 1"/>
    <property type="match status" value="1"/>
</dbReference>
<dbReference type="Gene3D" id="1.20.1070.10">
    <property type="entry name" value="Rhodopsin 7-helix transmembrane proteins"/>
    <property type="match status" value="1"/>
</dbReference>
<dbReference type="InterPro" id="IPR050125">
    <property type="entry name" value="GPCR_opsins"/>
</dbReference>
<dbReference type="InterPro" id="IPR000276">
    <property type="entry name" value="GPCR_Rhodpsn"/>
</dbReference>
<dbReference type="InterPro" id="IPR017452">
    <property type="entry name" value="GPCR_Rhodpsn_7TM"/>
</dbReference>
<dbReference type="InterPro" id="IPR001760">
    <property type="entry name" value="Opsin"/>
</dbReference>
<dbReference type="InterPro" id="IPR000378">
    <property type="entry name" value="Opsin_red/grn"/>
</dbReference>
<dbReference type="InterPro" id="IPR027430">
    <property type="entry name" value="Retinal_BS"/>
</dbReference>
<dbReference type="PANTHER" id="PTHR24240">
    <property type="entry name" value="OPSIN"/>
    <property type="match status" value="1"/>
</dbReference>
<dbReference type="Pfam" id="PF00001">
    <property type="entry name" value="7tm_1"/>
    <property type="match status" value="1"/>
</dbReference>
<dbReference type="PRINTS" id="PR00237">
    <property type="entry name" value="GPCRRHODOPSN"/>
</dbReference>
<dbReference type="PRINTS" id="PR00238">
    <property type="entry name" value="OPSIN"/>
</dbReference>
<dbReference type="PRINTS" id="PR00575">
    <property type="entry name" value="OPSINREDGRN"/>
</dbReference>
<dbReference type="SMART" id="SM01381">
    <property type="entry name" value="7TM_GPCR_Srsx"/>
    <property type="match status" value="1"/>
</dbReference>
<dbReference type="SUPFAM" id="SSF81321">
    <property type="entry name" value="Family A G protein-coupled receptor-like"/>
    <property type="match status" value="1"/>
</dbReference>
<dbReference type="PROSITE" id="PS00237">
    <property type="entry name" value="G_PROTEIN_RECEP_F1_1"/>
    <property type="match status" value="1"/>
</dbReference>
<dbReference type="PROSITE" id="PS50262">
    <property type="entry name" value="G_PROTEIN_RECEP_F1_2"/>
    <property type="match status" value="1"/>
</dbReference>
<dbReference type="PROSITE" id="PS00238">
    <property type="entry name" value="OPSIN"/>
    <property type="match status" value="1"/>
</dbReference>
<protein>
    <recommendedName>
        <fullName evidence="10">Medium-wave-sensitive opsin 1</fullName>
    </recommendedName>
    <alternativeName>
        <fullName>Green cone photoreceptor pigment</fullName>
    </alternativeName>
    <alternativeName>
        <fullName>Green-sensitive opsin</fullName>
        <shortName>GOP</shortName>
    </alternativeName>
</protein>
<accession>P04001</accession>
<gene>
    <name evidence="14" type="primary">OPN1MW</name>
    <name type="synonym">GCP</name>
</gene>
<proteinExistence type="evidence at protein level"/>